<accession>Q729I7</accession>
<feature type="chain" id="PRO_0000383855" description="Hydroxyethylthiazole kinase">
    <location>
        <begin position="1"/>
        <end position="267"/>
    </location>
</feature>
<feature type="binding site" evidence="1">
    <location>
        <position position="46"/>
    </location>
    <ligand>
        <name>substrate</name>
    </ligand>
</feature>
<feature type="binding site" evidence="1">
    <location>
        <position position="122"/>
    </location>
    <ligand>
        <name>ATP</name>
        <dbReference type="ChEBI" id="CHEBI:30616"/>
    </ligand>
</feature>
<feature type="binding site" evidence="1">
    <location>
        <position position="168"/>
    </location>
    <ligand>
        <name>ATP</name>
        <dbReference type="ChEBI" id="CHEBI:30616"/>
    </ligand>
</feature>
<feature type="binding site" evidence="1">
    <location>
        <position position="195"/>
    </location>
    <ligand>
        <name>substrate</name>
    </ligand>
</feature>
<comment type="function">
    <text evidence="1">Catalyzes the phosphorylation of the hydroxyl group of 4-methyl-5-beta-hydroxyethylthiazole (THZ).</text>
</comment>
<comment type="catalytic activity">
    <reaction evidence="1">
        <text>5-(2-hydroxyethyl)-4-methylthiazole + ATP = 4-methyl-5-(2-phosphooxyethyl)-thiazole + ADP + H(+)</text>
        <dbReference type="Rhea" id="RHEA:24212"/>
        <dbReference type="ChEBI" id="CHEBI:15378"/>
        <dbReference type="ChEBI" id="CHEBI:17957"/>
        <dbReference type="ChEBI" id="CHEBI:30616"/>
        <dbReference type="ChEBI" id="CHEBI:58296"/>
        <dbReference type="ChEBI" id="CHEBI:456216"/>
        <dbReference type="EC" id="2.7.1.50"/>
    </reaction>
</comment>
<comment type="cofactor">
    <cofactor evidence="1">
        <name>Mg(2+)</name>
        <dbReference type="ChEBI" id="CHEBI:18420"/>
    </cofactor>
</comment>
<comment type="pathway">
    <text evidence="1">Cofactor biosynthesis; thiamine diphosphate biosynthesis; 4-methyl-5-(2-phosphoethyl)-thiazole from 5-(2-hydroxyethyl)-4-methylthiazole: step 1/1.</text>
</comment>
<comment type="similarity">
    <text evidence="1">Belongs to the Thz kinase family.</text>
</comment>
<keyword id="KW-0067">ATP-binding</keyword>
<keyword id="KW-0418">Kinase</keyword>
<keyword id="KW-0460">Magnesium</keyword>
<keyword id="KW-0479">Metal-binding</keyword>
<keyword id="KW-0547">Nucleotide-binding</keyword>
<keyword id="KW-1185">Reference proteome</keyword>
<keyword id="KW-0784">Thiamine biosynthesis</keyword>
<keyword id="KW-0808">Transferase</keyword>
<name>THIM_NITV2</name>
<organism>
    <name type="scientific">Nitratidesulfovibrio vulgaris (strain ATCC 29579 / DSM 644 / CCUG 34227 / NCIMB 8303 / VKM B-1760 / Hildenborough)</name>
    <name type="common">Desulfovibrio vulgaris</name>
    <dbReference type="NCBI Taxonomy" id="882"/>
    <lineage>
        <taxon>Bacteria</taxon>
        <taxon>Pseudomonadati</taxon>
        <taxon>Thermodesulfobacteriota</taxon>
        <taxon>Desulfovibrionia</taxon>
        <taxon>Desulfovibrionales</taxon>
        <taxon>Desulfovibrionaceae</taxon>
        <taxon>Nitratidesulfovibrio</taxon>
    </lineage>
</organism>
<evidence type="ECO:0000255" key="1">
    <source>
        <dbReference type="HAMAP-Rule" id="MF_00228"/>
    </source>
</evidence>
<proteinExistence type="inferred from homology"/>
<reference key="1">
    <citation type="journal article" date="2004" name="Nat. Biotechnol.">
        <title>The genome sequence of the anaerobic, sulfate-reducing bacterium Desulfovibrio vulgaris Hildenborough.</title>
        <authorList>
            <person name="Heidelberg J.F."/>
            <person name="Seshadri R."/>
            <person name="Haveman S.A."/>
            <person name="Hemme C.L."/>
            <person name="Paulsen I.T."/>
            <person name="Kolonay J.F."/>
            <person name="Eisen J.A."/>
            <person name="Ward N.L."/>
            <person name="Methe B.A."/>
            <person name="Brinkac L.M."/>
            <person name="Daugherty S.C."/>
            <person name="DeBoy R.T."/>
            <person name="Dodson R.J."/>
            <person name="Durkin A.S."/>
            <person name="Madupu R."/>
            <person name="Nelson W.C."/>
            <person name="Sullivan S.A."/>
            <person name="Fouts D.E."/>
            <person name="Haft D.H."/>
            <person name="Selengut J."/>
            <person name="Peterson J.D."/>
            <person name="Davidsen T.M."/>
            <person name="Zafar N."/>
            <person name="Zhou L."/>
            <person name="Radune D."/>
            <person name="Dimitrov G."/>
            <person name="Hance M."/>
            <person name="Tran K."/>
            <person name="Khouri H.M."/>
            <person name="Gill J."/>
            <person name="Utterback T.R."/>
            <person name="Feldblyum T.V."/>
            <person name="Wall J.D."/>
            <person name="Voordouw G."/>
            <person name="Fraser C.M."/>
        </authorList>
    </citation>
    <scope>NUCLEOTIDE SEQUENCE [LARGE SCALE GENOMIC DNA]</scope>
    <source>
        <strain>ATCC 29579 / DSM 644 / CCUG 34227 / NCIMB 8303 / VKM B-1760 / Hildenborough</strain>
    </source>
</reference>
<gene>
    <name evidence="1" type="primary">thiM</name>
    <name type="ordered locus">DVU_2363</name>
</gene>
<dbReference type="EC" id="2.7.1.50" evidence="1"/>
<dbReference type="EMBL" id="AE017285">
    <property type="protein sequence ID" value="AAS96836.1"/>
    <property type="molecule type" value="Genomic_DNA"/>
</dbReference>
<dbReference type="RefSeq" id="WP_010939636.1">
    <property type="nucleotide sequence ID" value="NC_002937.3"/>
</dbReference>
<dbReference type="RefSeq" id="YP_011576.1">
    <property type="nucleotide sequence ID" value="NC_002937.3"/>
</dbReference>
<dbReference type="SMR" id="Q729I7"/>
<dbReference type="STRING" id="882.DVU_2363"/>
<dbReference type="PaxDb" id="882-DVU_2363"/>
<dbReference type="EnsemblBacteria" id="AAS96836">
    <property type="protein sequence ID" value="AAS96836"/>
    <property type="gene ID" value="DVU_2363"/>
</dbReference>
<dbReference type="KEGG" id="dvu:DVU_2363"/>
<dbReference type="PATRIC" id="fig|882.5.peg.2139"/>
<dbReference type="eggNOG" id="COG2145">
    <property type="taxonomic scope" value="Bacteria"/>
</dbReference>
<dbReference type="HOGENOM" id="CLU_019943_0_1_7"/>
<dbReference type="OrthoDB" id="8909021at2"/>
<dbReference type="PhylomeDB" id="Q729I7"/>
<dbReference type="UniPathway" id="UPA00060">
    <property type="reaction ID" value="UER00139"/>
</dbReference>
<dbReference type="Proteomes" id="UP000002194">
    <property type="component" value="Chromosome"/>
</dbReference>
<dbReference type="GO" id="GO:0005524">
    <property type="term" value="F:ATP binding"/>
    <property type="evidence" value="ECO:0007669"/>
    <property type="project" value="UniProtKB-UniRule"/>
</dbReference>
<dbReference type="GO" id="GO:0004417">
    <property type="term" value="F:hydroxyethylthiazole kinase activity"/>
    <property type="evidence" value="ECO:0007669"/>
    <property type="project" value="UniProtKB-UniRule"/>
</dbReference>
<dbReference type="GO" id="GO:0000287">
    <property type="term" value="F:magnesium ion binding"/>
    <property type="evidence" value="ECO:0007669"/>
    <property type="project" value="UniProtKB-UniRule"/>
</dbReference>
<dbReference type="GO" id="GO:0009228">
    <property type="term" value="P:thiamine biosynthetic process"/>
    <property type="evidence" value="ECO:0007669"/>
    <property type="project" value="UniProtKB-KW"/>
</dbReference>
<dbReference type="GO" id="GO:0009229">
    <property type="term" value="P:thiamine diphosphate biosynthetic process"/>
    <property type="evidence" value="ECO:0007669"/>
    <property type="project" value="UniProtKB-UniRule"/>
</dbReference>
<dbReference type="CDD" id="cd01170">
    <property type="entry name" value="THZ_kinase"/>
    <property type="match status" value="1"/>
</dbReference>
<dbReference type="Gene3D" id="3.40.1190.20">
    <property type="match status" value="1"/>
</dbReference>
<dbReference type="HAMAP" id="MF_00228">
    <property type="entry name" value="Thz_kinase"/>
    <property type="match status" value="1"/>
</dbReference>
<dbReference type="InterPro" id="IPR000417">
    <property type="entry name" value="Hyethyz_kinase"/>
</dbReference>
<dbReference type="InterPro" id="IPR029056">
    <property type="entry name" value="Ribokinase-like"/>
</dbReference>
<dbReference type="NCBIfam" id="NF006830">
    <property type="entry name" value="PRK09355.1"/>
    <property type="match status" value="1"/>
</dbReference>
<dbReference type="NCBIfam" id="TIGR00694">
    <property type="entry name" value="thiM"/>
    <property type="match status" value="1"/>
</dbReference>
<dbReference type="Pfam" id="PF02110">
    <property type="entry name" value="HK"/>
    <property type="match status" value="1"/>
</dbReference>
<dbReference type="PIRSF" id="PIRSF000513">
    <property type="entry name" value="Thz_kinase"/>
    <property type="match status" value="1"/>
</dbReference>
<dbReference type="PRINTS" id="PR01099">
    <property type="entry name" value="HYETHTZKNASE"/>
</dbReference>
<dbReference type="SUPFAM" id="SSF53613">
    <property type="entry name" value="Ribokinase-like"/>
    <property type="match status" value="1"/>
</dbReference>
<sequence length="267" mass="27311">MFSTGTVWKNVAAVRQRAPIIHSITNFVVMNTTANALLAAGASPIMAHAPEEMAEMAGIASALVLNIGTLTKPWVESMMLAGMAARERRLPVVLDPVGAGASSLRTTTALEILEKVRPAVVRGNGSEILALAGAAGDTRGVDSARTAHEAVDGGRALARRYGAVVVVSGAEDVVTDGDALWLVRGGSPLMPRVTGMGCTATVLVAAHVAVAADVLEGAVTGMAAMSAAGALAARRSQGPGSFQVAFLDVLHSLDLVTVRDEVEVVRA</sequence>
<protein>
    <recommendedName>
        <fullName evidence="1">Hydroxyethylthiazole kinase</fullName>
        <ecNumber evidence="1">2.7.1.50</ecNumber>
    </recommendedName>
    <alternativeName>
        <fullName evidence="1">4-methyl-5-beta-hydroxyethylthiazole kinase</fullName>
        <shortName evidence="1">TH kinase</shortName>
        <shortName evidence="1">Thz kinase</shortName>
    </alternativeName>
</protein>